<evidence type="ECO:0000255" key="1">
    <source>
        <dbReference type="PROSITE-ProRule" id="PRU00349"/>
    </source>
</evidence>
<protein>
    <recommendedName>
        <fullName>Uncharacterized HTH-type transcriptional regulator FruR</fullName>
    </recommendedName>
</protein>
<reference key="1">
    <citation type="submission" date="1997-07" db="EMBL/GenBank/DDBJ databases">
        <title>Sequence analysis of the mobA-ampS region of the Bacillus subtilis chromosome.</title>
        <authorList>
            <person name="Caldwell R.M."/>
            <person name="Ferrari E."/>
        </authorList>
    </citation>
    <scope>NUCLEOTIDE SEQUENCE [GENOMIC DNA]</scope>
    <source>
        <strain>168</strain>
    </source>
</reference>
<reference key="2">
    <citation type="journal article" date="1997" name="Nature">
        <title>The complete genome sequence of the Gram-positive bacterium Bacillus subtilis.</title>
        <authorList>
            <person name="Kunst F."/>
            <person name="Ogasawara N."/>
            <person name="Moszer I."/>
            <person name="Albertini A.M."/>
            <person name="Alloni G."/>
            <person name="Azevedo V."/>
            <person name="Bertero M.G."/>
            <person name="Bessieres P."/>
            <person name="Bolotin A."/>
            <person name="Borchert S."/>
            <person name="Borriss R."/>
            <person name="Boursier L."/>
            <person name="Brans A."/>
            <person name="Braun M."/>
            <person name="Brignell S.C."/>
            <person name="Bron S."/>
            <person name="Brouillet S."/>
            <person name="Bruschi C.V."/>
            <person name="Caldwell B."/>
            <person name="Capuano V."/>
            <person name="Carter N.M."/>
            <person name="Choi S.-K."/>
            <person name="Codani J.-J."/>
            <person name="Connerton I.F."/>
            <person name="Cummings N.J."/>
            <person name="Daniel R.A."/>
            <person name="Denizot F."/>
            <person name="Devine K.M."/>
            <person name="Duesterhoeft A."/>
            <person name="Ehrlich S.D."/>
            <person name="Emmerson P.T."/>
            <person name="Entian K.-D."/>
            <person name="Errington J."/>
            <person name="Fabret C."/>
            <person name="Ferrari E."/>
            <person name="Foulger D."/>
            <person name="Fritz C."/>
            <person name="Fujita M."/>
            <person name="Fujita Y."/>
            <person name="Fuma S."/>
            <person name="Galizzi A."/>
            <person name="Galleron N."/>
            <person name="Ghim S.-Y."/>
            <person name="Glaser P."/>
            <person name="Goffeau A."/>
            <person name="Golightly E.J."/>
            <person name="Grandi G."/>
            <person name="Guiseppi G."/>
            <person name="Guy B.J."/>
            <person name="Haga K."/>
            <person name="Haiech J."/>
            <person name="Harwood C.R."/>
            <person name="Henaut A."/>
            <person name="Hilbert H."/>
            <person name="Holsappel S."/>
            <person name="Hosono S."/>
            <person name="Hullo M.-F."/>
            <person name="Itaya M."/>
            <person name="Jones L.-M."/>
            <person name="Joris B."/>
            <person name="Karamata D."/>
            <person name="Kasahara Y."/>
            <person name="Klaerr-Blanchard M."/>
            <person name="Klein C."/>
            <person name="Kobayashi Y."/>
            <person name="Koetter P."/>
            <person name="Koningstein G."/>
            <person name="Krogh S."/>
            <person name="Kumano M."/>
            <person name="Kurita K."/>
            <person name="Lapidus A."/>
            <person name="Lardinois S."/>
            <person name="Lauber J."/>
            <person name="Lazarevic V."/>
            <person name="Lee S.-M."/>
            <person name="Levine A."/>
            <person name="Liu H."/>
            <person name="Masuda S."/>
            <person name="Mauel C."/>
            <person name="Medigue C."/>
            <person name="Medina N."/>
            <person name="Mellado R.P."/>
            <person name="Mizuno M."/>
            <person name="Moestl D."/>
            <person name="Nakai S."/>
            <person name="Noback M."/>
            <person name="Noone D."/>
            <person name="O'Reilly M."/>
            <person name="Ogawa K."/>
            <person name="Ogiwara A."/>
            <person name="Oudega B."/>
            <person name="Park S.-H."/>
            <person name="Parro V."/>
            <person name="Pohl T.M."/>
            <person name="Portetelle D."/>
            <person name="Porwollik S."/>
            <person name="Prescott A.M."/>
            <person name="Presecan E."/>
            <person name="Pujic P."/>
            <person name="Purnelle B."/>
            <person name="Rapoport G."/>
            <person name="Rey M."/>
            <person name="Reynolds S."/>
            <person name="Rieger M."/>
            <person name="Rivolta C."/>
            <person name="Rocha E."/>
            <person name="Roche B."/>
            <person name="Rose M."/>
            <person name="Sadaie Y."/>
            <person name="Sato T."/>
            <person name="Scanlan E."/>
            <person name="Schleich S."/>
            <person name="Schroeter R."/>
            <person name="Scoffone F."/>
            <person name="Sekiguchi J."/>
            <person name="Sekowska A."/>
            <person name="Seror S.J."/>
            <person name="Serror P."/>
            <person name="Shin B.-S."/>
            <person name="Soldo B."/>
            <person name="Sorokin A."/>
            <person name="Tacconi E."/>
            <person name="Takagi T."/>
            <person name="Takahashi H."/>
            <person name="Takemaru K."/>
            <person name="Takeuchi M."/>
            <person name="Tamakoshi A."/>
            <person name="Tanaka T."/>
            <person name="Terpstra P."/>
            <person name="Tognoni A."/>
            <person name="Tosato V."/>
            <person name="Uchiyama S."/>
            <person name="Vandenbol M."/>
            <person name="Vannier F."/>
            <person name="Vassarotti A."/>
            <person name="Viari A."/>
            <person name="Wambutt R."/>
            <person name="Wedler E."/>
            <person name="Wedler H."/>
            <person name="Weitzenegger T."/>
            <person name="Winters P."/>
            <person name="Wipat A."/>
            <person name="Yamamoto H."/>
            <person name="Yamane K."/>
            <person name="Yasumoto K."/>
            <person name="Yata K."/>
            <person name="Yoshida K."/>
            <person name="Yoshikawa H.-F."/>
            <person name="Zumstein E."/>
            <person name="Yoshikawa H."/>
            <person name="Danchin A."/>
        </authorList>
    </citation>
    <scope>NUCLEOTIDE SEQUENCE [LARGE SCALE GENOMIC DNA]</scope>
    <source>
        <strain>168</strain>
    </source>
</reference>
<keyword id="KW-0238">DNA-binding</keyword>
<keyword id="KW-1185">Reference proteome</keyword>
<keyword id="KW-0678">Repressor</keyword>
<keyword id="KW-0804">Transcription</keyword>
<keyword id="KW-0805">Transcription regulation</keyword>
<accession>O31713</accession>
<accession>Q7BVR7</accession>
<sequence>MLTPERHQLIIDQIEKHDVVKIQELINLTNASESTIRRDLSTLEERGFLKRVHGGAAKLSDIRLEPDMLEKSSKNLHDKLKIAEKAASLLEEGDCIYLDAGTTTLHMIDFMDKTKDIVVVTNGVMHIDALIRKEISFYLLGGYVKHRTGAIIGGASLVAMDQYRFDKSFLGTNGVHTEAGFTTPDPDEALLKQKAIKQAKHAYVLADPSKFGEISFSAFAGIGDATIITTDAEELTFDNYQEKTVVKVVKP</sequence>
<gene>
    <name type="primary">fruR</name>
    <name type="ordered locus">BSU14380</name>
</gene>
<proteinExistence type="predicted"/>
<organism>
    <name type="scientific">Bacillus subtilis (strain 168)</name>
    <dbReference type="NCBI Taxonomy" id="224308"/>
    <lineage>
        <taxon>Bacteria</taxon>
        <taxon>Bacillati</taxon>
        <taxon>Bacillota</taxon>
        <taxon>Bacilli</taxon>
        <taxon>Bacillales</taxon>
        <taxon>Bacillaceae</taxon>
        <taxon>Bacillus</taxon>
    </lineage>
</organism>
<feature type="chain" id="PRO_0000360704" description="Uncharacterized HTH-type transcriptional regulator FruR">
    <location>
        <begin position="1"/>
        <end position="251"/>
    </location>
</feature>
<feature type="domain" description="HTH deoR-type" evidence="1">
    <location>
        <begin position="3"/>
        <end position="58"/>
    </location>
</feature>
<feature type="DNA-binding region" description="H-T-H motif" evidence="1">
    <location>
        <begin position="20"/>
        <end position="39"/>
    </location>
</feature>
<name>FRUR_BACSU</name>
<dbReference type="EMBL" id="AF012285">
    <property type="protein sequence ID" value="AAC24913.1"/>
    <property type="molecule type" value="Genomic_DNA"/>
</dbReference>
<dbReference type="EMBL" id="AL009126">
    <property type="protein sequence ID" value="CAB13311.1"/>
    <property type="molecule type" value="Genomic_DNA"/>
</dbReference>
<dbReference type="PIR" id="B69627">
    <property type="entry name" value="B69627"/>
</dbReference>
<dbReference type="RefSeq" id="NP_389321.1">
    <property type="nucleotide sequence ID" value="NC_000964.3"/>
</dbReference>
<dbReference type="RefSeq" id="WP_003245688.1">
    <property type="nucleotide sequence ID" value="NZ_OZ025638.1"/>
</dbReference>
<dbReference type="SMR" id="O31713"/>
<dbReference type="FunCoup" id="O31713">
    <property type="interactions" value="2"/>
</dbReference>
<dbReference type="STRING" id="224308.BSU14380"/>
<dbReference type="PaxDb" id="224308-BSU14380"/>
<dbReference type="DNASU" id="936082"/>
<dbReference type="EnsemblBacteria" id="CAB13311">
    <property type="protein sequence ID" value="CAB13311"/>
    <property type="gene ID" value="BSU_14380"/>
</dbReference>
<dbReference type="GeneID" id="936082"/>
<dbReference type="KEGG" id="bsu:BSU14380"/>
<dbReference type="PATRIC" id="fig|224308.179.peg.1568"/>
<dbReference type="eggNOG" id="COG1349">
    <property type="taxonomic scope" value="Bacteria"/>
</dbReference>
<dbReference type="InParanoid" id="O31713"/>
<dbReference type="OrthoDB" id="9797223at2"/>
<dbReference type="PhylomeDB" id="O31713"/>
<dbReference type="BioCyc" id="BSUB:BSU14380-MONOMER"/>
<dbReference type="Proteomes" id="UP000001570">
    <property type="component" value="Chromosome"/>
</dbReference>
<dbReference type="GO" id="GO:0000987">
    <property type="term" value="F:cis-regulatory region sequence-specific DNA binding"/>
    <property type="evidence" value="ECO:0000318"/>
    <property type="project" value="GO_Central"/>
</dbReference>
<dbReference type="GO" id="GO:0098531">
    <property type="term" value="F:ligand-modulated transcription factor activity"/>
    <property type="evidence" value="ECO:0000318"/>
    <property type="project" value="GO_Central"/>
</dbReference>
<dbReference type="GO" id="GO:0006355">
    <property type="term" value="P:regulation of DNA-templated transcription"/>
    <property type="evidence" value="ECO:0000318"/>
    <property type="project" value="GO_Central"/>
</dbReference>
<dbReference type="Gene3D" id="3.40.50.1360">
    <property type="match status" value="1"/>
</dbReference>
<dbReference type="Gene3D" id="1.10.10.10">
    <property type="entry name" value="Winged helix-like DNA-binding domain superfamily/Winged helix DNA-binding domain"/>
    <property type="match status" value="1"/>
</dbReference>
<dbReference type="InterPro" id="IPR050313">
    <property type="entry name" value="Carb_Metab_HTH_regulators"/>
</dbReference>
<dbReference type="InterPro" id="IPR014036">
    <property type="entry name" value="DeoR-like_C"/>
</dbReference>
<dbReference type="InterPro" id="IPR001034">
    <property type="entry name" value="DeoR_HTH"/>
</dbReference>
<dbReference type="InterPro" id="IPR037171">
    <property type="entry name" value="NagB/RpiA_transferase-like"/>
</dbReference>
<dbReference type="InterPro" id="IPR018356">
    <property type="entry name" value="Tscrpt_reg_HTH_DeoR_CS"/>
</dbReference>
<dbReference type="InterPro" id="IPR036388">
    <property type="entry name" value="WH-like_DNA-bd_sf"/>
</dbReference>
<dbReference type="InterPro" id="IPR036390">
    <property type="entry name" value="WH_DNA-bd_sf"/>
</dbReference>
<dbReference type="PANTHER" id="PTHR30363">
    <property type="entry name" value="HTH-TYPE TRANSCRIPTIONAL REGULATOR SRLR-RELATED"/>
    <property type="match status" value="1"/>
</dbReference>
<dbReference type="PANTHER" id="PTHR30363:SF56">
    <property type="entry name" value="TRANSCRIPTIONAL REGULATOR, DEOR FAMILY"/>
    <property type="match status" value="1"/>
</dbReference>
<dbReference type="Pfam" id="PF00455">
    <property type="entry name" value="DeoRC"/>
    <property type="match status" value="1"/>
</dbReference>
<dbReference type="Pfam" id="PF08220">
    <property type="entry name" value="HTH_DeoR"/>
    <property type="match status" value="1"/>
</dbReference>
<dbReference type="PRINTS" id="PR00037">
    <property type="entry name" value="HTHLACR"/>
</dbReference>
<dbReference type="SMART" id="SM01134">
    <property type="entry name" value="DeoRC"/>
    <property type="match status" value="1"/>
</dbReference>
<dbReference type="SMART" id="SM00420">
    <property type="entry name" value="HTH_DEOR"/>
    <property type="match status" value="1"/>
</dbReference>
<dbReference type="SUPFAM" id="SSF100950">
    <property type="entry name" value="NagB/RpiA/CoA transferase-like"/>
    <property type="match status" value="1"/>
</dbReference>
<dbReference type="SUPFAM" id="SSF46785">
    <property type="entry name" value="Winged helix' DNA-binding domain"/>
    <property type="match status" value="1"/>
</dbReference>
<dbReference type="PROSITE" id="PS00894">
    <property type="entry name" value="HTH_DEOR_1"/>
    <property type="match status" value="1"/>
</dbReference>
<dbReference type="PROSITE" id="PS51000">
    <property type="entry name" value="HTH_DEOR_2"/>
    <property type="match status" value="1"/>
</dbReference>